<evidence type="ECO:0000255" key="1">
    <source>
        <dbReference type="HAMAP-Rule" id="MF_00172"/>
    </source>
</evidence>
<sequence length="784" mass="87928">MTSVHSLGFPRIGHKRELKKALESFWSREIDEQELQSRAAQLRDRHWRIQQTCGMDLVPVGDFSLYDHMLDMSCTLGAIPPRYGFAGGQVGLDTFFAMARGSATQPAMEMTKWFDTNYHFIVPEFHEGMDFRLSSERLFDQVKEVQALGLKAKPVLVGPITYLWLGKEKDLNAEAHHDAQHHHDDSACHGHGAPIGAACFDRLTLLPKVLPVYAEILARLAEMGVEWVQIDEPALALDLPQEWVEALESAYQTLRRDKTPKVLLATYFDSVADHAKALKALPVAGVHLDLRRAPQQLNSFLSDYPADKVLSLGVVDGRNVWRADLDAALELLQPAHKQLGDRLWVAPSCSLLHTPVDLEQETELDAELKSWLSFSVQKLDEVAIIGRALKEGVESVAQELAAARAAVASRKSSPRIHNPAVAQRLEGLGQDDGRRKSPFPIREAAQRARFKLPAFPTTSIGSFPQTPEIRKARLQNRKGELSNADYQKAMEAEIALVVKEQERLGIDVPVHGEPERNDMVEYFGEQLAGFAFTRHGWVQSYGSRYVKPPLIFGDVSRPTPMTVAWSKYAQSLTQRPMKGMLTGPVTILQWSFVRDDQPRERTALQIALAIRDEVRDLIDAGIGIIQIDEPAYREGLPLKRKDWGHYLEWASRAFRISAQIAPDDVQIHTHMCYSEFNDILPAIAAMDADVITIETSRSQMELLDAFATFNYPNEIGPGVYDIHSPRVPSVEEMVGLMEKAVKVVPAERLWINPDCGLKTRKWAEVTPALENMVEAARQVRARHG</sequence>
<comment type="function">
    <text evidence="1">Catalyzes the transfer of a methyl group from 5-methyltetrahydrofolate to homocysteine resulting in methionine formation.</text>
</comment>
<comment type="catalytic activity">
    <reaction evidence="1">
        <text>5-methyltetrahydropteroyltri-L-glutamate + L-homocysteine = tetrahydropteroyltri-L-glutamate + L-methionine</text>
        <dbReference type="Rhea" id="RHEA:21196"/>
        <dbReference type="ChEBI" id="CHEBI:57844"/>
        <dbReference type="ChEBI" id="CHEBI:58140"/>
        <dbReference type="ChEBI" id="CHEBI:58199"/>
        <dbReference type="ChEBI" id="CHEBI:58207"/>
        <dbReference type="EC" id="2.1.1.14"/>
    </reaction>
</comment>
<comment type="cofactor">
    <cofactor evidence="1">
        <name>Zn(2+)</name>
        <dbReference type="ChEBI" id="CHEBI:29105"/>
    </cofactor>
    <text evidence="1">Binds 1 zinc ion per subunit.</text>
</comment>
<comment type="pathway">
    <text evidence="1">Amino-acid biosynthesis; L-methionine biosynthesis via de novo pathway; L-methionine from L-homocysteine (MetE route): step 1/1.</text>
</comment>
<comment type="similarity">
    <text evidence="1">Belongs to the vitamin-B12 independent methionine synthase family.</text>
</comment>
<protein>
    <recommendedName>
        <fullName evidence="1">5-methyltetrahydropteroyltriglutamate--homocysteine methyltransferase</fullName>
        <ecNumber evidence="1">2.1.1.14</ecNumber>
    </recommendedName>
    <alternativeName>
        <fullName evidence="1">Cobalamin-independent methionine synthase</fullName>
    </alternativeName>
    <alternativeName>
        <fullName evidence="1">Methionine synthase, vitamin-B12 independent isozyme</fullName>
    </alternativeName>
</protein>
<proteinExistence type="inferred from homology"/>
<keyword id="KW-0028">Amino-acid biosynthesis</keyword>
<keyword id="KW-0479">Metal-binding</keyword>
<keyword id="KW-0486">Methionine biosynthesis</keyword>
<keyword id="KW-0489">Methyltransferase</keyword>
<keyword id="KW-0677">Repeat</keyword>
<keyword id="KW-0808">Transferase</keyword>
<keyword id="KW-0862">Zinc</keyword>
<gene>
    <name evidence="1" type="primary">metE</name>
    <name type="ordered locus">Lferr_0465</name>
</gene>
<feature type="chain" id="PRO_1000097811" description="5-methyltetrahydropteroyltriglutamate--homocysteine methyltransferase">
    <location>
        <begin position="1"/>
        <end position="784"/>
    </location>
</feature>
<feature type="active site" description="Proton donor" evidence="1">
    <location>
        <position position="723"/>
    </location>
</feature>
<feature type="binding site" evidence="1">
    <location>
        <begin position="16"/>
        <end position="19"/>
    </location>
    <ligand>
        <name>5-methyltetrahydropteroyltri-L-glutamate</name>
        <dbReference type="ChEBI" id="CHEBI:58207"/>
    </ligand>
</feature>
<feature type="binding site" evidence="1">
    <location>
        <position position="112"/>
    </location>
    <ligand>
        <name>5-methyltetrahydropteroyltri-L-glutamate</name>
        <dbReference type="ChEBI" id="CHEBI:58207"/>
    </ligand>
</feature>
<feature type="binding site" evidence="1">
    <location>
        <begin position="460"/>
        <end position="462"/>
    </location>
    <ligand>
        <name>L-homocysteine</name>
        <dbReference type="ChEBI" id="CHEBI:58199"/>
    </ligand>
</feature>
<feature type="binding site" evidence="1">
    <location>
        <begin position="460"/>
        <end position="462"/>
    </location>
    <ligand>
        <name>L-methionine</name>
        <dbReference type="ChEBI" id="CHEBI:57844"/>
    </ligand>
</feature>
<feature type="binding site" evidence="1">
    <location>
        <position position="513"/>
    </location>
    <ligand>
        <name>L-homocysteine</name>
        <dbReference type="ChEBI" id="CHEBI:58199"/>
    </ligand>
</feature>
<feature type="binding site" evidence="1">
    <location>
        <position position="513"/>
    </location>
    <ligand>
        <name>L-methionine</name>
        <dbReference type="ChEBI" id="CHEBI:57844"/>
    </ligand>
</feature>
<feature type="binding site" evidence="1">
    <location>
        <position position="590"/>
    </location>
    <ligand>
        <name>5-methyltetrahydropteroyltri-L-glutamate</name>
        <dbReference type="ChEBI" id="CHEBI:58207"/>
    </ligand>
</feature>
<feature type="binding site" evidence="1">
    <location>
        <position position="628"/>
    </location>
    <ligand>
        <name>L-homocysteine</name>
        <dbReference type="ChEBI" id="CHEBI:58199"/>
    </ligand>
</feature>
<feature type="binding site" evidence="1">
    <location>
        <position position="628"/>
    </location>
    <ligand>
        <name>L-methionine</name>
        <dbReference type="ChEBI" id="CHEBI:57844"/>
    </ligand>
</feature>
<feature type="binding site" evidence="1">
    <location>
        <position position="634"/>
    </location>
    <ligand>
        <name>5-methyltetrahydropteroyltri-L-glutamate</name>
        <dbReference type="ChEBI" id="CHEBI:58207"/>
    </ligand>
</feature>
<feature type="binding site" evidence="1">
    <location>
        <position position="670"/>
    </location>
    <ligand>
        <name>Zn(2+)</name>
        <dbReference type="ChEBI" id="CHEBI:29105"/>
        <note>catalytic</note>
    </ligand>
</feature>
<feature type="binding site" evidence="1">
    <location>
        <position position="672"/>
    </location>
    <ligand>
        <name>Zn(2+)</name>
        <dbReference type="ChEBI" id="CHEBI:29105"/>
        <note>catalytic</note>
    </ligand>
</feature>
<feature type="binding site" evidence="1">
    <location>
        <position position="694"/>
    </location>
    <ligand>
        <name>Zn(2+)</name>
        <dbReference type="ChEBI" id="CHEBI:29105"/>
        <note>catalytic</note>
    </ligand>
</feature>
<feature type="binding site" evidence="1">
    <location>
        <position position="755"/>
    </location>
    <ligand>
        <name>Zn(2+)</name>
        <dbReference type="ChEBI" id="CHEBI:29105"/>
        <note>catalytic</note>
    </ligand>
</feature>
<organism>
    <name type="scientific">Acidithiobacillus ferrooxidans (strain ATCC 53993 / BNL-5-31)</name>
    <name type="common">Leptospirillum ferrooxidans (ATCC 53993)</name>
    <dbReference type="NCBI Taxonomy" id="380394"/>
    <lineage>
        <taxon>Bacteria</taxon>
        <taxon>Pseudomonadati</taxon>
        <taxon>Pseudomonadota</taxon>
        <taxon>Acidithiobacillia</taxon>
        <taxon>Acidithiobacillales</taxon>
        <taxon>Acidithiobacillaceae</taxon>
        <taxon>Acidithiobacillus</taxon>
    </lineage>
</organism>
<reference key="1">
    <citation type="submission" date="2008-08" db="EMBL/GenBank/DDBJ databases">
        <title>Complete sequence of Acidithiobacillus ferrooxidans ATCC 53993.</title>
        <authorList>
            <person name="Lucas S."/>
            <person name="Copeland A."/>
            <person name="Lapidus A."/>
            <person name="Glavina del Rio T."/>
            <person name="Dalin E."/>
            <person name="Tice H."/>
            <person name="Bruce D."/>
            <person name="Goodwin L."/>
            <person name="Pitluck S."/>
            <person name="Sims D."/>
            <person name="Brettin T."/>
            <person name="Detter J.C."/>
            <person name="Han C."/>
            <person name="Kuske C.R."/>
            <person name="Larimer F."/>
            <person name="Land M."/>
            <person name="Hauser L."/>
            <person name="Kyrpides N."/>
            <person name="Lykidis A."/>
            <person name="Borole A.P."/>
        </authorList>
    </citation>
    <scope>NUCLEOTIDE SEQUENCE [LARGE SCALE GENOMIC DNA]</scope>
    <source>
        <strain>ATCC 53993 / BNL-5-31</strain>
    </source>
</reference>
<dbReference type="EC" id="2.1.1.14" evidence="1"/>
<dbReference type="EMBL" id="CP001132">
    <property type="protein sequence ID" value="ACH82719.1"/>
    <property type="molecule type" value="Genomic_DNA"/>
</dbReference>
<dbReference type="RefSeq" id="WP_012536066.1">
    <property type="nucleotide sequence ID" value="NC_011206.1"/>
</dbReference>
<dbReference type="SMR" id="B5ELU7"/>
<dbReference type="GeneID" id="65279670"/>
<dbReference type="KEGG" id="afe:Lferr_0465"/>
<dbReference type="eggNOG" id="COG0620">
    <property type="taxonomic scope" value="Bacteria"/>
</dbReference>
<dbReference type="HOGENOM" id="CLU_013175_0_0_6"/>
<dbReference type="UniPathway" id="UPA00051">
    <property type="reaction ID" value="UER00082"/>
</dbReference>
<dbReference type="GO" id="GO:0003871">
    <property type="term" value="F:5-methyltetrahydropteroyltriglutamate-homocysteine S-methyltransferase activity"/>
    <property type="evidence" value="ECO:0007669"/>
    <property type="project" value="UniProtKB-UniRule"/>
</dbReference>
<dbReference type="GO" id="GO:0008270">
    <property type="term" value="F:zinc ion binding"/>
    <property type="evidence" value="ECO:0007669"/>
    <property type="project" value="InterPro"/>
</dbReference>
<dbReference type="GO" id="GO:0009086">
    <property type="term" value="P:methionine biosynthetic process"/>
    <property type="evidence" value="ECO:0007669"/>
    <property type="project" value="UniProtKB-UniRule"/>
</dbReference>
<dbReference type="GO" id="GO:0032259">
    <property type="term" value="P:methylation"/>
    <property type="evidence" value="ECO:0007669"/>
    <property type="project" value="UniProtKB-KW"/>
</dbReference>
<dbReference type="CDD" id="cd03311">
    <property type="entry name" value="CIMS_C_terminal_like"/>
    <property type="match status" value="1"/>
</dbReference>
<dbReference type="CDD" id="cd03312">
    <property type="entry name" value="CIMS_N_terminal_like"/>
    <property type="match status" value="1"/>
</dbReference>
<dbReference type="FunFam" id="3.20.20.210:FF:000002">
    <property type="entry name" value="5-methyltetrahydropteroyltriglutamate--homocysteine methyltransferase"/>
    <property type="match status" value="1"/>
</dbReference>
<dbReference type="Gene3D" id="3.20.20.210">
    <property type="match status" value="2"/>
</dbReference>
<dbReference type="HAMAP" id="MF_00172">
    <property type="entry name" value="Meth_synth"/>
    <property type="match status" value="1"/>
</dbReference>
<dbReference type="InterPro" id="IPR013215">
    <property type="entry name" value="Cbl-indep_Met_Synth_N"/>
</dbReference>
<dbReference type="InterPro" id="IPR006276">
    <property type="entry name" value="Cobalamin-indep_Met_synthase"/>
</dbReference>
<dbReference type="InterPro" id="IPR002629">
    <property type="entry name" value="Met_Synth_C/arc"/>
</dbReference>
<dbReference type="InterPro" id="IPR038071">
    <property type="entry name" value="UROD/MetE-like_sf"/>
</dbReference>
<dbReference type="NCBIfam" id="NF003556">
    <property type="entry name" value="PRK05222.1"/>
    <property type="match status" value="1"/>
</dbReference>
<dbReference type="PANTHER" id="PTHR30519">
    <property type="entry name" value="5-METHYLTETRAHYDROPTEROYLTRIGLUTAMATE--HOMOCYSTEINE METHYLTRANSFERASE"/>
    <property type="match status" value="1"/>
</dbReference>
<dbReference type="Pfam" id="PF08267">
    <property type="entry name" value="Meth_synt_1"/>
    <property type="match status" value="1"/>
</dbReference>
<dbReference type="Pfam" id="PF01717">
    <property type="entry name" value="Meth_synt_2"/>
    <property type="match status" value="1"/>
</dbReference>
<dbReference type="PIRSF" id="PIRSF000382">
    <property type="entry name" value="MeTrfase_B12_ind"/>
    <property type="match status" value="1"/>
</dbReference>
<dbReference type="SUPFAM" id="SSF51726">
    <property type="entry name" value="UROD/MetE-like"/>
    <property type="match status" value="2"/>
</dbReference>
<name>METE_ACIF5</name>
<accession>B5ELU7</accession>